<reference key="1">
    <citation type="journal article" date="1994" name="Yeast">
        <title>The sequence of a 36 kb segment on the left arm of yeast chromosome X identifies 24 open reading frames including NUC1, PRP21 (SPP91), CDC6, CRY2, the gene for S24, a homologue to the aconitase gene ACO1 and two homologues to chromosome III genes.</title>
        <authorList>
            <person name="Purnelle B."/>
            <person name="Coster F."/>
            <person name="Goffeau A."/>
        </authorList>
    </citation>
    <scope>NUCLEOTIDE SEQUENCE [GENOMIC DNA]</scope>
    <source>
        <strain>ATCC 204508 / S288c</strain>
    </source>
</reference>
<reference key="2">
    <citation type="journal article" date="1996" name="EMBO J.">
        <title>Complete nucleotide sequence of Saccharomyces cerevisiae chromosome X.</title>
        <authorList>
            <person name="Galibert F."/>
            <person name="Alexandraki D."/>
            <person name="Baur A."/>
            <person name="Boles E."/>
            <person name="Chalwatzis N."/>
            <person name="Chuat J.-C."/>
            <person name="Coster F."/>
            <person name="Cziepluch C."/>
            <person name="de Haan M."/>
            <person name="Domdey H."/>
            <person name="Durand P."/>
            <person name="Entian K.-D."/>
            <person name="Gatius M."/>
            <person name="Goffeau A."/>
            <person name="Grivell L.A."/>
            <person name="Hennemann A."/>
            <person name="Herbert C.J."/>
            <person name="Heumann K."/>
            <person name="Hilger F."/>
            <person name="Hollenberg C.P."/>
            <person name="Huang M.-E."/>
            <person name="Jacq C."/>
            <person name="Jauniaux J.-C."/>
            <person name="Katsoulou C."/>
            <person name="Kirchrath L."/>
            <person name="Kleine K."/>
            <person name="Kordes E."/>
            <person name="Koetter P."/>
            <person name="Liebl S."/>
            <person name="Louis E.J."/>
            <person name="Manus V."/>
            <person name="Mewes H.-W."/>
            <person name="Miosga T."/>
            <person name="Obermaier B."/>
            <person name="Perea J."/>
            <person name="Pohl T.M."/>
            <person name="Portetelle D."/>
            <person name="Pujol A."/>
            <person name="Purnelle B."/>
            <person name="Ramezani Rad M."/>
            <person name="Rasmussen S.W."/>
            <person name="Rose M."/>
            <person name="Rossau R."/>
            <person name="Schaaff-Gerstenschlaeger I."/>
            <person name="Smits P.H.M."/>
            <person name="Scarcez T."/>
            <person name="Soriano N."/>
            <person name="To Van D."/>
            <person name="Tzermia M."/>
            <person name="Van Broekhoven A."/>
            <person name="Vandenbol M."/>
            <person name="Wedler H."/>
            <person name="von Wettstein D."/>
            <person name="Wambutt R."/>
            <person name="Zagulski M."/>
            <person name="Zollner A."/>
            <person name="Karpfinger-Hartl L."/>
        </authorList>
    </citation>
    <scope>NUCLEOTIDE SEQUENCE [LARGE SCALE GENOMIC DNA]</scope>
    <source>
        <strain>ATCC 204508 / S288c</strain>
    </source>
</reference>
<reference key="3">
    <citation type="journal article" date="2014" name="G3 (Bethesda)">
        <title>The reference genome sequence of Saccharomyces cerevisiae: Then and now.</title>
        <authorList>
            <person name="Engel S.R."/>
            <person name="Dietrich F.S."/>
            <person name="Fisk D.G."/>
            <person name="Binkley G."/>
            <person name="Balakrishnan R."/>
            <person name="Costanzo M.C."/>
            <person name="Dwight S.S."/>
            <person name="Hitz B.C."/>
            <person name="Karra K."/>
            <person name="Nash R.S."/>
            <person name="Weng S."/>
            <person name="Wong E.D."/>
            <person name="Lloyd P."/>
            <person name="Skrzypek M.S."/>
            <person name="Miyasato S.R."/>
            <person name="Simison M."/>
            <person name="Cherry J.M."/>
        </authorList>
    </citation>
    <scope>GENOME REANNOTATION</scope>
    <source>
        <strain>ATCC 204508 / S288c</strain>
    </source>
</reference>
<reference key="4">
    <citation type="journal article" date="2007" name="Genome Res.">
        <title>Approaching a complete repository of sequence-verified protein-encoding clones for Saccharomyces cerevisiae.</title>
        <authorList>
            <person name="Hu Y."/>
            <person name="Rolfs A."/>
            <person name="Bhullar B."/>
            <person name="Murthy T.V.S."/>
            <person name="Zhu C."/>
            <person name="Berger M.F."/>
            <person name="Camargo A.A."/>
            <person name="Kelley F."/>
            <person name="McCarron S."/>
            <person name="Jepson D."/>
            <person name="Richardson A."/>
            <person name="Raphael J."/>
            <person name="Moreira D."/>
            <person name="Taycher E."/>
            <person name="Zuo D."/>
            <person name="Mohr S."/>
            <person name="Kane M.F."/>
            <person name="Williamson J."/>
            <person name="Simpson A.J.G."/>
            <person name="Bulyk M.L."/>
            <person name="Harlow E."/>
            <person name="Marsischky G."/>
            <person name="Kolodner R.D."/>
            <person name="LaBaer J."/>
        </authorList>
    </citation>
    <scope>NUCLEOTIDE SEQUENCE [GENOMIC DNA]</scope>
    <source>
        <strain>ATCC 204508 / S288c</strain>
    </source>
</reference>
<reference key="5">
    <citation type="journal article" date="1993" name="Proc. Natl. Acad. Sci. U.S.A.">
        <title>The Saccharomyces cerevisiae PRP21 gene product is an integral component of the prespliceosome.</title>
        <authorList>
            <person name="Arenas J.E."/>
            <person name="Abelson J.N."/>
        </authorList>
    </citation>
    <scope>NUCLEOTIDE SEQUENCE [GENOMIC DNA] OF 1-323</scope>
</reference>
<reference key="6">
    <citation type="journal article" date="1997" name="Genetics">
        <title>Large scale identification of genes involved in cell surface biosynthesis and architecture in Saccharomyces cerevisiae.</title>
        <authorList>
            <person name="Lussier M."/>
            <person name="White A.-M."/>
            <person name="Sheraton J."/>
            <person name="di Paolo T."/>
            <person name="Treadwell J."/>
            <person name="Southard S.B."/>
            <person name="Horenstein C.I."/>
            <person name="Chen-Weiner J."/>
            <person name="Ram A.F.J."/>
            <person name="Kapteyn J.C."/>
            <person name="Roemer T.W."/>
            <person name="Vo D.H."/>
            <person name="Bondoc D.C."/>
            <person name="Hall J."/>
            <person name="Zhong W.-W."/>
            <person name="Sdicu A.-M."/>
            <person name="Davies J."/>
            <person name="Klis F.M."/>
            <person name="Robbins P.W."/>
            <person name="Bussey H."/>
        </authorList>
    </citation>
    <scope>IDENTIFICATION</scope>
</reference>
<reference key="7">
    <citation type="journal article" date="2003" name="Nature">
        <title>Global analysis of protein localization in budding yeast.</title>
        <authorList>
            <person name="Huh W.-K."/>
            <person name="Falvo J.V."/>
            <person name="Gerke L.C."/>
            <person name="Carroll A.S."/>
            <person name="Howson R.W."/>
            <person name="Weissman J.S."/>
            <person name="O'Shea E.K."/>
        </authorList>
    </citation>
    <scope>SUBCELLULAR LOCATION [LARGE SCALE ANALYSIS]</scope>
</reference>
<reference key="8">
    <citation type="journal article" date="2003" name="Nature">
        <title>Global analysis of protein expression in yeast.</title>
        <authorList>
            <person name="Ghaemmaghami S."/>
            <person name="Huh W.-K."/>
            <person name="Bower K."/>
            <person name="Howson R.W."/>
            <person name="Belle A."/>
            <person name="Dephoure N."/>
            <person name="O'Shea E.K."/>
            <person name="Weissman J.S."/>
        </authorList>
    </citation>
    <scope>LEVEL OF PROTEIN EXPRESSION [LARGE SCALE ANALYSIS]</scope>
</reference>
<reference key="9">
    <citation type="journal article" date="2008" name="Mol. Cell. Proteomics">
        <title>A multidimensional chromatography technology for in-depth phosphoproteome analysis.</title>
        <authorList>
            <person name="Albuquerque C.P."/>
            <person name="Smolka M.B."/>
            <person name="Payne S.H."/>
            <person name="Bafna V."/>
            <person name="Eng J."/>
            <person name="Zhou H."/>
        </authorList>
    </citation>
    <scope>IDENTIFICATION BY MASS SPECTROMETRY [LARGE SCALE ANALYSIS]</scope>
</reference>
<reference key="10">
    <citation type="journal article" date="2009" name="Science">
        <title>Global analysis of Cdk1 substrate phosphorylation sites provides insights into evolution.</title>
        <authorList>
            <person name="Holt L.J."/>
            <person name="Tuch B.B."/>
            <person name="Villen J."/>
            <person name="Johnson A.D."/>
            <person name="Gygi S.P."/>
            <person name="Morgan D.O."/>
        </authorList>
    </citation>
    <scope>IDENTIFICATION BY MASS SPECTROMETRY [LARGE SCALE ANALYSIS]</scope>
</reference>
<name>ECM25_YEAST</name>
<keyword id="KW-0961">Cell wall biogenesis/degradation</keyword>
<keyword id="KW-0963">Cytoplasm</keyword>
<keyword id="KW-1185">Reference proteome</keyword>
<gene>
    <name type="primary">ECM25</name>
    <name type="ordered locus">YJL201W</name>
    <name type="ORF">J0325</name>
</gene>
<feature type="chain" id="PRO_0000086918" description="Protein ECM25">
    <location>
        <begin position="1"/>
        <end position="599"/>
    </location>
</feature>
<feature type="domain" description="Rho-GAP" evidence="1">
    <location>
        <begin position="181"/>
        <end position="359"/>
    </location>
</feature>
<feature type="region of interest" description="Disordered" evidence="2">
    <location>
        <begin position="362"/>
        <end position="447"/>
    </location>
</feature>
<feature type="region of interest" description="Disordered" evidence="2">
    <location>
        <begin position="468"/>
        <end position="495"/>
    </location>
</feature>
<feature type="region of interest" description="Disordered" evidence="2">
    <location>
        <begin position="543"/>
        <end position="563"/>
    </location>
</feature>
<feature type="compositionally biased region" description="Low complexity" evidence="2">
    <location>
        <begin position="363"/>
        <end position="373"/>
    </location>
</feature>
<feature type="compositionally biased region" description="Low complexity" evidence="2">
    <location>
        <begin position="396"/>
        <end position="413"/>
    </location>
</feature>
<feature type="compositionally biased region" description="Low complexity" evidence="2">
    <location>
        <begin position="468"/>
        <end position="483"/>
    </location>
</feature>
<feature type="compositionally biased region" description="Basic and acidic residues" evidence="2">
    <location>
        <begin position="543"/>
        <end position="562"/>
    </location>
</feature>
<feature type="site" description="Arginine finger; crucial for GTP hydrolysis by stabilizing the transition state" evidence="1">
    <location>
        <position position="215"/>
    </location>
</feature>
<evidence type="ECO:0000255" key="1">
    <source>
        <dbReference type="PROSITE-ProRule" id="PRU00172"/>
    </source>
</evidence>
<evidence type="ECO:0000256" key="2">
    <source>
        <dbReference type="SAM" id="MobiDB-lite"/>
    </source>
</evidence>
<evidence type="ECO:0000269" key="3">
    <source>
    </source>
</evidence>
<evidence type="ECO:0000269" key="4">
    <source>
    </source>
</evidence>
<dbReference type="EMBL" id="X77688">
    <property type="protein sequence ID" value="CAA54756.1"/>
    <property type="molecule type" value="Genomic_DNA"/>
</dbReference>
<dbReference type="EMBL" id="Z49476">
    <property type="protein sequence ID" value="CAA89496.1"/>
    <property type="molecule type" value="Genomic_DNA"/>
</dbReference>
<dbReference type="EMBL" id="AY692747">
    <property type="protein sequence ID" value="AAT92766.1"/>
    <property type="molecule type" value="Genomic_DNA"/>
</dbReference>
<dbReference type="EMBL" id="L07744">
    <property type="protein sequence ID" value="AAB09602.1"/>
    <property type="molecule type" value="Genomic_DNA"/>
</dbReference>
<dbReference type="EMBL" id="BK006943">
    <property type="protein sequence ID" value="DAA08608.1"/>
    <property type="molecule type" value="Genomic_DNA"/>
</dbReference>
<dbReference type="PIR" id="S46630">
    <property type="entry name" value="S46630"/>
</dbReference>
<dbReference type="RefSeq" id="NP_012334.1">
    <property type="nucleotide sequence ID" value="NM_001181634.1"/>
</dbReference>
<dbReference type="SMR" id="P32525"/>
<dbReference type="BioGRID" id="33556">
    <property type="interactions" value="97"/>
</dbReference>
<dbReference type="DIP" id="DIP-2926N"/>
<dbReference type="FunCoup" id="P32525">
    <property type="interactions" value="77"/>
</dbReference>
<dbReference type="IntAct" id="P32525">
    <property type="interactions" value="8"/>
</dbReference>
<dbReference type="MINT" id="P32525"/>
<dbReference type="STRING" id="4932.YJL201W"/>
<dbReference type="iPTMnet" id="P32525"/>
<dbReference type="PaxDb" id="4932-YJL201W"/>
<dbReference type="PeptideAtlas" id="P32525"/>
<dbReference type="EnsemblFungi" id="YJL201W_mRNA">
    <property type="protein sequence ID" value="YJL201W"/>
    <property type="gene ID" value="YJL201W"/>
</dbReference>
<dbReference type="GeneID" id="853229"/>
<dbReference type="KEGG" id="sce:YJL201W"/>
<dbReference type="AGR" id="SGD:S000003737"/>
<dbReference type="SGD" id="S000003737">
    <property type="gene designation" value="ECM25"/>
</dbReference>
<dbReference type="VEuPathDB" id="FungiDB:YJL201W"/>
<dbReference type="eggNOG" id="KOG4406">
    <property type="taxonomic scope" value="Eukaryota"/>
</dbReference>
<dbReference type="HOGENOM" id="CLU_027718_0_0_1"/>
<dbReference type="InParanoid" id="P32525"/>
<dbReference type="OMA" id="KKISWVY"/>
<dbReference type="OrthoDB" id="410651at2759"/>
<dbReference type="BioCyc" id="YEAST:G3O-31630-MONOMER"/>
<dbReference type="Reactome" id="R-SCE-8980692">
    <property type="pathway name" value="RHOA GTPase cycle"/>
</dbReference>
<dbReference type="Reactome" id="R-SCE-9013026">
    <property type="pathway name" value="RHOB GTPase cycle"/>
</dbReference>
<dbReference type="Reactome" id="R-SCE-9013106">
    <property type="pathway name" value="RHOC GTPase cycle"/>
</dbReference>
<dbReference type="Reactome" id="R-SCE-9013148">
    <property type="pathway name" value="CDC42 GTPase cycle"/>
</dbReference>
<dbReference type="Reactome" id="R-SCE-9013405">
    <property type="pathway name" value="RHOD GTPase cycle"/>
</dbReference>
<dbReference type="Reactome" id="R-SCE-9013406">
    <property type="pathway name" value="RHOQ GTPase cycle"/>
</dbReference>
<dbReference type="Reactome" id="R-SCE-9013409">
    <property type="pathway name" value="RHOJ GTPase cycle"/>
</dbReference>
<dbReference type="Reactome" id="R-SCE-9035034">
    <property type="pathway name" value="RHOF GTPase cycle"/>
</dbReference>
<dbReference type="Reactome" id="R-SCE-9696270">
    <property type="pathway name" value="RND2 GTPase cycle"/>
</dbReference>
<dbReference type="BioGRID-ORCS" id="853229">
    <property type="hits" value="0 hits in 10 CRISPR screens"/>
</dbReference>
<dbReference type="PRO" id="PR:P32525"/>
<dbReference type="Proteomes" id="UP000002311">
    <property type="component" value="Chromosome X"/>
</dbReference>
<dbReference type="RNAct" id="P32525">
    <property type="molecule type" value="protein"/>
</dbReference>
<dbReference type="GO" id="GO:0005737">
    <property type="term" value="C:cytoplasm"/>
    <property type="evidence" value="ECO:0007005"/>
    <property type="project" value="SGD"/>
</dbReference>
<dbReference type="GO" id="GO:0042805">
    <property type="term" value="F:actinin binding"/>
    <property type="evidence" value="ECO:0000314"/>
    <property type="project" value="SGD"/>
</dbReference>
<dbReference type="GO" id="GO:0005096">
    <property type="term" value="F:GTPase activator activity"/>
    <property type="evidence" value="ECO:0000318"/>
    <property type="project" value="GO_Central"/>
</dbReference>
<dbReference type="GO" id="GO:0071555">
    <property type="term" value="P:cell wall organization"/>
    <property type="evidence" value="ECO:0007669"/>
    <property type="project" value="UniProtKB-KW"/>
</dbReference>
<dbReference type="GO" id="GO:0080135">
    <property type="term" value="P:regulation of cellular response to stress"/>
    <property type="evidence" value="ECO:0000315"/>
    <property type="project" value="SGD"/>
</dbReference>
<dbReference type="GO" id="GO:0051510">
    <property type="term" value="P:regulation of unidimensional cell growth"/>
    <property type="evidence" value="ECO:0000315"/>
    <property type="project" value="SGD"/>
</dbReference>
<dbReference type="GO" id="GO:0007264">
    <property type="term" value="P:small GTPase-mediated signal transduction"/>
    <property type="evidence" value="ECO:0000318"/>
    <property type="project" value="GO_Central"/>
</dbReference>
<dbReference type="CDD" id="cd00159">
    <property type="entry name" value="RhoGAP"/>
    <property type="match status" value="1"/>
</dbReference>
<dbReference type="FunFam" id="3.40.525.10:FF:000026">
    <property type="entry name" value="ECM25p protein"/>
    <property type="match status" value="1"/>
</dbReference>
<dbReference type="Gene3D" id="3.40.525.10">
    <property type="entry name" value="CRAL-TRIO lipid binding domain"/>
    <property type="match status" value="1"/>
</dbReference>
<dbReference type="Gene3D" id="1.10.555.10">
    <property type="entry name" value="Rho GTPase activation protein"/>
    <property type="match status" value="1"/>
</dbReference>
<dbReference type="InterPro" id="IPR001251">
    <property type="entry name" value="CRAL-TRIO_dom"/>
</dbReference>
<dbReference type="InterPro" id="IPR036865">
    <property type="entry name" value="CRAL-TRIO_dom_sf"/>
</dbReference>
<dbReference type="InterPro" id="IPR008936">
    <property type="entry name" value="Rho_GTPase_activation_prot"/>
</dbReference>
<dbReference type="InterPro" id="IPR000198">
    <property type="entry name" value="RhoGAP_dom"/>
</dbReference>
<dbReference type="PANTHER" id="PTHR45808">
    <property type="entry name" value="RHO GTPASE-ACTIVATING PROTEIN 68F"/>
    <property type="match status" value="1"/>
</dbReference>
<dbReference type="PANTHER" id="PTHR45808:SF2">
    <property type="entry name" value="RHO GTPASE-ACTIVATING PROTEIN 68F"/>
    <property type="match status" value="1"/>
</dbReference>
<dbReference type="Pfam" id="PF13716">
    <property type="entry name" value="CRAL_TRIO_2"/>
    <property type="match status" value="1"/>
</dbReference>
<dbReference type="Pfam" id="PF00620">
    <property type="entry name" value="RhoGAP"/>
    <property type="match status" value="1"/>
</dbReference>
<dbReference type="SMART" id="SM00324">
    <property type="entry name" value="RhoGAP"/>
    <property type="match status" value="1"/>
</dbReference>
<dbReference type="SUPFAM" id="SSF48350">
    <property type="entry name" value="GTPase activation domain, GAP"/>
    <property type="match status" value="1"/>
</dbReference>
<dbReference type="PROSITE" id="PS50238">
    <property type="entry name" value="RHOGAP"/>
    <property type="match status" value="1"/>
</dbReference>
<proteinExistence type="evidence at protein level"/>
<sequence>MIDINVNNIFFRSYSVDPNSGHAIYVFDSTYLPASDEIGDKQVYDLLINALMDRLVMKLPQAPYSLVIFSSGFSQRKISWVYGIKMFAKLPKETKFYLQKIFIVHESFFVRSVYQVISNAMNFNFLDSKDSQHDFPSLVHVLDLTSLSELIDITRLRISLNVYLYDYQIREHINVPEEYYNRLTPLAIRQYRQLVFDKIFKKLQNDALLCELIFQKPGNYKKVNIFLDIIKRNNYIDLSQWDIYSLASVWLNYFIKNKAKPLIPIELIPLPIVDDLKFTSETFRKIIKFNQYQDLFMVIIPFFNRIIAHGESTKHDSRTLSKALTPALCKEKLSMMTNDRLAIGSRYIKNLLDFFPEIAKEISSPPSSVSSSSTIPVLPKPRKSSPTRYSELGCLTLPRSRSPSPQRSVTSPTYTPVALQNTPVLKPKSSSRNVSSPSFNAKPPLPIKAVTRPQLSLTSNSNTDLALASSSTDTLSSPTKTPSADSLPLSNSSTDLTISDNIKEMVKDEPAKDKNSVETDIFVQQFESLTLVQNAKIKKFDKELQEKKKKNETTSKTADKFSQKGYSDIKASNKVSRLAALYEERLQGLQVMNEMKQRW</sequence>
<comment type="function">
    <text>May be involved in cell wall organization and biogenesis.</text>
</comment>
<comment type="interaction">
    <interactant intactId="EBI-26215">
        <id>P32525</id>
    </interactant>
    <interactant intactId="EBI-17313">
        <id>P32790</id>
        <label>SLA1</label>
    </interactant>
    <organismsDiffer>false</organismsDiffer>
    <experiments>5</experiments>
</comment>
<comment type="subcellular location">
    <subcellularLocation>
        <location evidence="3">Cytoplasm</location>
    </subcellularLocation>
</comment>
<comment type="miscellaneous">
    <text evidence="4">Present with 1750 molecules/cell in log phase SD medium.</text>
</comment>
<accession>P32525</accession>
<accession>D6VVZ2</accession>
<organism>
    <name type="scientific">Saccharomyces cerevisiae (strain ATCC 204508 / S288c)</name>
    <name type="common">Baker's yeast</name>
    <dbReference type="NCBI Taxonomy" id="559292"/>
    <lineage>
        <taxon>Eukaryota</taxon>
        <taxon>Fungi</taxon>
        <taxon>Dikarya</taxon>
        <taxon>Ascomycota</taxon>
        <taxon>Saccharomycotina</taxon>
        <taxon>Saccharomycetes</taxon>
        <taxon>Saccharomycetales</taxon>
        <taxon>Saccharomycetaceae</taxon>
        <taxon>Saccharomyces</taxon>
    </lineage>
</organism>
<protein>
    <recommendedName>
        <fullName>Protein ECM25</fullName>
    </recommendedName>
    <alternativeName>
        <fullName>Extracellular matrix protein 25</fullName>
    </alternativeName>
</protein>